<proteinExistence type="inferred from homology"/>
<sequence>MLIQDTIFYRPDWRWHNFLKYLTNNLSKYNCLEKTIPSEYSYKDSTYGSKKSKKNVNLSTWGVTHKKRIKFARAVCINSPNYSVLNFLIIPNTIYNVPFFGVDFVSLPNSYLLVLDFQPSLKIQNQYNNDLLEKLIKLKNHCHSSLPLAEKMSADVARFFSPGVIWSKLPKEERSDFLITNQLYTSFKEYLDLYLEILFESKEVNIELQKELTNGQINYLNYRRDNDPARPMLSSLFGQEFTESLIEEVLFTT</sequence>
<comment type="function">
    <text evidence="1">Catalyzes the two-electron reduction of the C2 and C3(1) diene system of 15,16-dihydrobiliverdin.</text>
</comment>
<comment type="catalytic activity">
    <reaction evidence="1">
        <text>(3Z)-phycoerythrobilin + oxidized 2[4Fe-4S]-[ferredoxin] = 15,16-dihydrobiliverdin + reduced 2[4Fe-4S]-[ferredoxin] + 2 H(+)</text>
        <dbReference type="Rhea" id="RHEA:22092"/>
        <dbReference type="Rhea" id="RHEA-COMP:10002"/>
        <dbReference type="Rhea" id="RHEA-COMP:10004"/>
        <dbReference type="ChEBI" id="CHEBI:15378"/>
        <dbReference type="ChEBI" id="CHEBI:33722"/>
        <dbReference type="ChEBI" id="CHEBI:33723"/>
        <dbReference type="ChEBI" id="CHEBI:57438"/>
        <dbReference type="ChEBI" id="CHEBI:57899"/>
        <dbReference type="EC" id="1.3.7.3"/>
    </reaction>
</comment>
<comment type="similarity">
    <text evidence="1">Belongs to the HY2 family.</text>
</comment>
<name>PEBB_PROMS</name>
<dbReference type="EC" id="1.3.7.3" evidence="1"/>
<dbReference type="EMBL" id="CP000551">
    <property type="protein sequence ID" value="ABM71084.1"/>
    <property type="molecule type" value="Genomic_DNA"/>
</dbReference>
<dbReference type="RefSeq" id="WP_011819206.1">
    <property type="nucleotide sequence ID" value="NC_008816.1"/>
</dbReference>
<dbReference type="SMR" id="A2BTH3"/>
<dbReference type="STRING" id="146891.A9601_18011"/>
<dbReference type="KEGG" id="pmb:A9601_18011"/>
<dbReference type="eggNOG" id="ENOG502Z8GK">
    <property type="taxonomic scope" value="Bacteria"/>
</dbReference>
<dbReference type="HOGENOM" id="CLU_086208_1_0_3"/>
<dbReference type="OrthoDB" id="421401at2"/>
<dbReference type="Proteomes" id="UP000002590">
    <property type="component" value="Chromosome"/>
</dbReference>
<dbReference type="GO" id="GO:0050897">
    <property type="term" value="F:cobalt ion binding"/>
    <property type="evidence" value="ECO:0007669"/>
    <property type="project" value="InterPro"/>
</dbReference>
<dbReference type="GO" id="GO:0050618">
    <property type="term" value="F:phycoerythrobilin:ferredoxin oxidoreductase activity"/>
    <property type="evidence" value="ECO:0007669"/>
    <property type="project" value="UniProtKB-UniRule"/>
</dbReference>
<dbReference type="GO" id="GO:0010024">
    <property type="term" value="P:phytochromobilin biosynthetic process"/>
    <property type="evidence" value="ECO:0007669"/>
    <property type="project" value="InterPro"/>
</dbReference>
<dbReference type="Gene3D" id="3.40.1500.20">
    <property type="match status" value="1"/>
</dbReference>
<dbReference type="HAMAP" id="MF_00793">
    <property type="entry name" value="PebB"/>
    <property type="match status" value="1"/>
</dbReference>
<dbReference type="InterPro" id="IPR009249">
    <property type="entry name" value="Ferredoxin-dep_bilin_Rdtase"/>
</dbReference>
<dbReference type="InterPro" id="IPR022827">
    <property type="entry name" value="Phycoerythrobilin_Fdx_Rdtase"/>
</dbReference>
<dbReference type="NCBIfam" id="NF009721">
    <property type="entry name" value="PRK13248.1"/>
    <property type="match status" value="1"/>
</dbReference>
<dbReference type="PANTHER" id="PTHR34557">
    <property type="entry name" value="PHYTOCHROMOBILIN:FERREDOXIN OXIDOREDUCTASE, CHLOROPLASTIC"/>
    <property type="match status" value="1"/>
</dbReference>
<dbReference type="PANTHER" id="PTHR34557:SF1">
    <property type="entry name" value="PHYTOCHROMOBILIN:FERREDOXIN OXIDOREDUCTASE, CHLOROPLASTIC"/>
    <property type="match status" value="1"/>
</dbReference>
<dbReference type="Pfam" id="PF05996">
    <property type="entry name" value="Fe_bilin_red"/>
    <property type="match status" value="1"/>
</dbReference>
<keyword id="KW-0560">Oxidoreductase</keyword>
<organism>
    <name type="scientific">Prochlorococcus marinus (strain AS9601)</name>
    <dbReference type="NCBI Taxonomy" id="146891"/>
    <lineage>
        <taxon>Bacteria</taxon>
        <taxon>Bacillati</taxon>
        <taxon>Cyanobacteriota</taxon>
        <taxon>Cyanophyceae</taxon>
        <taxon>Synechococcales</taxon>
        <taxon>Prochlorococcaceae</taxon>
        <taxon>Prochlorococcus</taxon>
    </lineage>
</organism>
<accession>A2BTH3</accession>
<feature type="chain" id="PRO_1000148511" description="Phycoerythrobilin:ferredoxin oxidoreductase">
    <location>
        <begin position="1"/>
        <end position="253"/>
    </location>
</feature>
<evidence type="ECO:0000255" key="1">
    <source>
        <dbReference type="HAMAP-Rule" id="MF_00793"/>
    </source>
</evidence>
<protein>
    <recommendedName>
        <fullName evidence="1">Phycoerythrobilin:ferredoxin oxidoreductase</fullName>
        <ecNumber evidence="1">1.3.7.3</ecNumber>
    </recommendedName>
</protein>
<reference key="1">
    <citation type="journal article" date="2007" name="PLoS Genet.">
        <title>Patterns and implications of gene gain and loss in the evolution of Prochlorococcus.</title>
        <authorList>
            <person name="Kettler G.C."/>
            <person name="Martiny A.C."/>
            <person name="Huang K."/>
            <person name="Zucker J."/>
            <person name="Coleman M.L."/>
            <person name="Rodrigue S."/>
            <person name="Chen F."/>
            <person name="Lapidus A."/>
            <person name="Ferriera S."/>
            <person name="Johnson J."/>
            <person name="Steglich C."/>
            <person name="Church G.M."/>
            <person name="Richardson P."/>
            <person name="Chisholm S.W."/>
        </authorList>
    </citation>
    <scope>NUCLEOTIDE SEQUENCE [LARGE SCALE GENOMIC DNA]</scope>
    <source>
        <strain>AS9601</strain>
    </source>
</reference>
<gene>
    <name evidence="1" type="primary">pebB</name>
    <name type="ordered locus">A9601_18011</name>
</gene>